<organism>
    <name type="scientific">Xylanimonas cellulosilytica (strain DSM 15894 / JCM 12276 / CECT 5975 / KCTC 9989 / LMG 20990 / NBRC 107835 / XIL07)</name>
    <dbReference type="NCBI Taxonomy" id="446471"/>
    <lineage>
        <taxon>Bacteria</taxon>
        <taxon>Bacillati</taxon>
        <taxon>Actinomycetota</taxon>
        <taxon>Actinomycetes</taxon>
        <taxon>Micrococcales</taxon>
        <taxon>Promicromonosporaceae</taxon>
        <taxon>Xylanimonas</taxon>
    </lineage>
</organism>
<accession>D1BS27</accession>
<name>PSA_XYLCX</name>
<evidence type="ECO:0000255" key="1">
    <source>
        <dbReference type="HAMAP-Rule" id="MF_00289"/>
    </source>
</evidence>
<keyword id="KW-0963">Cytoplasm</keyword>
<keyword id="KW-0647">Proteasome</keyword>
<keyword id="KW-1185">Reference proteome</keyword>
<gene>
    <name evidence="1" type="primary">prcA</name>
    <name type="ordered locus">Xcel_1489</name>
</gene>
<comment type="function">
    <text evidence="1">Component of the proteasome core, a large protease complex with broad specificity involved in protein degradation.</text>
</comment>
<comment type="activity regulation">
    <text evidence="1">The formation of the proteasomal ATPase ARC-20S proteasome complex, likely via the docking of the C-termini of ARC into the intersubunit pockets in the alpha-rings, may trigger opening of the gate for substrate entry. Interconversion between the open-gate and close-gate conformations leads to a dynamic regulation of the 20S proteasome proteolysis activity.</text>
</comment>
<comment type="pathway">
    <text evidence="1">Protein degradation; proteasomal Pup-dependent pathway.</text>
</comment>
<comment type="subunit">
    <text evidence="1">The 20S proteasome core is composed of 14 alpha and 14 beta subunits that assemble into four stacked heptameric rings, resulting in a barrel-shaped structure. The two inner rings, each composed of seven catalytic beta subunits, are sandwiched by two outer rings, each composed of seven alpha subunits. The catalytic chamber with the active sites is on the inside of the barrel. Has a gated structure, the ends of the cylinder being occluded by the N-termini of the alpha-subunits. Is capped by the proteasome-associated ATPase, ARC.</text>
</comment>
<comment type="subcellular location">
    <subcellularLocation>
        <location evidence="1">Cytoplasm</location>
    </subcellularLocation>
</comment>
<comment type="similarity">
    <text evidence="1">Belongs to the peptidase T1A family.</text>
</comment>
<proteinExistence type="inferred from homology"/>
<sequence length="244" mass="26454">MTMPFYVSPEQLMKDRADFARKGIARGRSVVVLGYDGGILFATENPSRALHKISEIYDRIAFAAVGKYNEFENLRVAGVRYADLRGYSYDRKDVTARGLANAYAQTLGTVFTTESKPLEVELVVAEVGDTPEADQIYRLSYDGSVADEHGHVAMGGQAEQLGKRLDDGWREGLTLTEALDLATTTLGAVGTDGQLLAAGSERTIDAGQLEVAVLDRARPRRAFRRLHGAALTHGRGAPHGEGAR</sequence>
<feature type="chain" id="PRO_0000397182" description="Proteasome subunit alpha">
    <location>
        <begin position="1"/>
        <end position="244"/>
    </location>
</feature>
<reference key="1">
    <citation type="submission" date="2009-11" db="EMBL/GenBank/DDBJ databases">
        <title>The complete chromosome of Xylanimonas cellulosilytica DSM 15894.</title>
        <authorList>
            <consortium name="US DOE Joint Genome Institute (JGI-PGF)"/>
            <person name="Lucas S."/>
            <person name="Copeland A."/>
            <person name="Lapidus A."/>
            <person name="Glavina del Rio T."/>
            <person name="Dalin E."/>
            <person name="Tice H."/>
            <person name="Bruce D."/>
            <person name="Goodwin L."/>
            <person name="Pitluck S."/>
            <person name="Kyrpides N."/>
            <person name="Mavromatis K."/>
            <person name="Ivanova N."/>
            <person name="Mikhailova N."/>
            <person name="Foster B."/>
            <person name="Clum A."/>
            <person name="Brettin T."/>
            <person name="Detter J.C."/>
            <person name="Han C."/>
            <person name="Larimer F."/>
            <person name="Land M."/>
            <person name="Hauser L."/>
            <person name="Markowitz V."/>
            <person name="Cheng J.F."/>
            <person name="Hugenholtz P."/>
            <person name="Woyke T."/>
            <person name="Wu D."/>
            <person name="Gehrich-Schroeter G."/>
            <person name="Schneider S."/>
            <person name="Pukall S.R."/>
            <person name="Klenk H.P."/>
            <person name="Eisen J.A."/>
        </authorList>
    </citation>
    <scope>NUCLEOTIDE SEQUENCE [LARGE SCALE GENOMIC DNA]</scope>
    <source>
        <strain>DSM 15894 / JCM 12276 / CECT 5975 / KCTC 9989 / LMG 20990 / NBRC 107835 / XIL07</strain>
    </source>
</reference>
<protein>
    <recommendedName>
        <fullName evidence="1">Proteasome subunit alpha</fullName>
    </recommendedName>
    <alternativeName>
        <fullName evidence="1">20S proteasome alpha subunit</fullName>
    </alternativeName>
    <alternativeName>
        <fullName evidence="1">Proteasome core protein PrcA</fullName>
    </alternativeName>
</protein>
<dbReference type="EMBL" id="CP001821">
    <property type="protein sequence ID" value="ACZ30519.1"/>
    <property type="molecule type" value="Genomic_DNA"/>
</dbReference>
<dbReference type="RefSeq" id="WP_012878261.1">
    <property type="nucleotide sequence ID" value="NC_013530.1"/>
</dbReference>
<dbReference type="SMR" id="D1BS27"/>
<dbReference type="STRING" id="446471.Xcel_1489"/>
<dbReference type="MEROPS" id="T01.980"/>
<dbReference type="KEGG" id="xce:Xcel_1489"/>
<dbReference type="eggNOG" id="COG0638">
    <property type="taxonomic scope" value="Bacteria"/>
</dbReference>
<dbReference type="HOGENOM" id="CLU_071031_0_0_11"/>
<dbReference type="OrthoDB" id="9775643at2"/>
<dbReference type="UniPathway" id="UPA00997"/>
<dbReference type="Proteomes" id="UP000002255">
    <property type="component" value="Chromosome"/>
</dbReference>
<dbReference type="GO" id="GO:0005737">
    <property type="term" value="C:cytoplasm"/>
    <property type="evidence" value="ECO:0007669"/>
    <property type="project" value="UniProtKB-SubCell"/>
</dbReference>
<dbReference type="GO" id="GO:0019773">
    <property type="term" value="C:proteasome core complex, alpha-subunit complex"/>
    <property type="evidence" value="ECO:0007669"/>
    <property type="project" value="UniProtKB-UniRule"/>
</dbReference>
<dbReference type="GO" id="GO:0004298">
    <property type="term" value="F:threonine-type endopeptidase activity"/>
    <property type="evidence" value="ECO:0007669"/>
    <property type="project" value="InterPro"/>
</dbReference>
<dbReference type="GO" id="GO:0019941">
    <property type="term" value="P:modification-dependent protein catabolic process"/>
    <property type="evidence" value="ECO:0007669"/>
    <property type="project" value="UniProtKB-UniRule"/>
</dbReference>
<dbReference type="GO" id="GO:0010498">
    <property type="term" value="P:proteasomal protein catabolic process"/>
    <property type="evidence" value="ECO:0007669"/>
    <property type="project" value="UniProtKB-UniRule"/>
</dbReference>
<dbReference type="CDD" id="cd01906">
    <property type="entry name" value="proteasome_protease_HslV"/>
    <property type="match status" value="1"/>
</dbReference>
<dbReference type="Gene3D" id="3.60.20.10">
    <property type="entry name" value="Glutamine Phosphoribosylpyrophosphate, subunit 1, domain 1"/>
    <property type="match status" value="1"/>
</dbReference>
<dbReference type="HAMAP" id="MF_00289_B">
    <property type="entry name" value="Proteasome_A_B"/>
    <property type="match status" value="1"/>
</dbReference>
<dbReference type="InterPro" id="IPR029055">
    <property type="entry name" value="Ntn_hydrolases_N"/>
</dbReference>
<dbReference type="InterPro" id="IPR023332">
    <property type="entry name" value="Proteasome_alpha-type"/>
</dbReference>
<dbReference type="InterPro" id="IPR022296">
    <property type="entry name" value="Proteasome_asu_bac"/>
</dbReference>
<dbReference type="InterPro" id="IPR001353">
    <property type="entry name" value="Proteasome_sua/b"/>
</dbReference>
<dbReference type="NCBIfam" id="TIGR03691">
    <property type="entry name" value="20S_bact_alpha"/>
    <property type="match status" value="1"/>
</dbReference>
<dbReference type="Pfam" id="PF00227">
    <property type="entry name" value="Proteasome"/>
    <property type="match status" value="1"/>
</dbReference>
<dbReference type="SUPFAM" id="SSF56235">
    <property type="entry name" value="N-terminal nucleophile aminohydrolases (Ntn hydrolases)"/>
    <property type="match status" value="1"/>
</dbReference>
<dbReference type="PROSITE" id="PS51475">
    <property type="entry name" value="PROTEASOME_ALPHA_2"/>
    <property type="match status" value="1"/>
</dbReference>